<dbReference type="EMBL" id="AF281062">
    <property type="protein sequence ID" value="AAF87300.1"/>
    <property type="molecule type" value="mRNA"/>
</dbReference>
<dbReference type="EMBL" id="AB010068">
    <property type="protein sequence ID" value="BAB11211.1"/>
    <property type="molecule type" value="Genomic_DNA"/>
</dbReference>
<dbReference type="EMBL" id="CP002688">
    <property type="protein sequence ID" value="AED93330.1"/>
    <property type="molecule type" value="Genomic_DNA"/>
</dbReference>
<dbReference type="EMBL" id="BT002012">
    <property type="protein sequence ID" value="AAN72023.1"/>
    <property type="molecule type" value="mRNA"/>
</dbReference>
<dbReference type="EMBL" id="BT009683">
    <property type="protein sequence ID" value="AAP81801.1"/>
    <property type="molecule type" value="mRNA"/>
</dbReference>
<dbReference type="RefSeq" id="NP_197847.3">
    <property type="nucleotide sequence ID" value="NM_122367.4"/>
</dbReference>
<dbReference type="SMR" id="Q9LKG8"/>
<dbReference type="FunCoup" id="Q9LKG8">
    <property type="interactions" value="96"/>
</dbReference>
<dbReference type="IntAct" id="Q9LKG8">
    <property type="interactions" value="34"/>
</dbReference>
<dbReference type="STRING" id="3702.Q9LKG8"/>
<dbReference type="PaxDb" id="3702-AT5G24590.2"/>
<dbReference type="ProteomicsDB" id="251240"/>
<dbReference type="EnsemblPlants" id="AT5G24590.2">
    <property type="protein sequence ID" value="AT5G24590.2"/>
    <property type="gene ID" value="AT5G24590"/>
</dbReference>
<dbReference type="GeneID" id="832530"/>
<dbReference type="Gramene" id="AT5G24590.2">
    <property type="protein sequence ID" value="AT5G24590.2"/>
    <property type="gene ID" value="AT5G24590"/>
</dbReference>
<dbReference type="KEGG" id="ath:AT5G24590"/>
<dbReference type="Araport" id="AT5G24590"/>
<dbReference type="TAIR" id="AT5G24590">
    <property type="gene designation" value="TIP"/>
</dbReference>
<dbReference type="eggNOG" id="ENOG502QS98">
    <property type="taxonomic scope" value="Eukaryota"/>
</dbReference>
<dbReference type="HOGENOM" id="CLU_016524_1_0_1"/>
<dbReference type="InParanoid" id="Q9LKG8"/>
<dbReference type="OMA" id="WLSFMEF"/>
<dbReference type="PhylomeDB" id="Q9LKG8"/>
<dbReference type="PRO" id="PR:Q9LKG8"/>
<dbReference type="Proteomes" id="UP000006548">
    <property type="component" value="Chromosome 5"/>
</dbReference>
<dbReference type="ExpressionAtlas" id="Q9LKG8">
    <property type="expression patterns" value="baseline and differential"/>
</dbReference>
<dbReference type="GO" id="GO:0012505">
    <property type="term" value="C:endomembrane system"/>
    <property type="evidence" value="ECO:0007669"/>
    <property type="project" value="UniProtKB-SubCell"/>
</dbReference>
<dbReference type="GO" id="GO:0016020">
    <property type="term" value="C:membrane"/>
    <property type="evidence" value="ECO:0007669"/>
    <property type="project" value="UniProtKB-KW"/>
</dbReference>
<dbReference type="GO" id="GO:0005634">
    <property type="term" value="C:nucleus"/>
    <property type="evidence" value="ECO:0000314"/>
    <property type="project" value="TAIR"/>
</dbReference>
<dbReference type="GO" id="GO:0003677">
    <property type="term" value="F:DNA binding"/>
    <property type="evidence" value="ECO:0000314"/>
    <property type="project" value="UniProtKB"/>
</dbReference>
<dbReference type="GO" id="GO:0003700">
    <property type="term" value="F:DNA-binding transcription factor activity"/>
    <property type="evidence" value="ECO:0000314"/>
    <property type="project" value="TAIR"/>
</dbReference>
<dbReference type="GO" id="GO:0000976">
    <property type="term" value="F:transcription cis-regulatory region binding"/>
    <property type="evidence" value="ECO:0000353"/>
    <property type="project" value="TAIR"/>
</dbReference>
<dbReference type="GO" id="GO:0003713">
    <property type="term" value="F:transcription coactivator activity"/>
    <property type="evidence" value="ECO:0000314"/>
    <property type="project" value="TAIR"/>
</dbReference>
<dbReference type="GO" id="GO:0071456">
    <property type="term" value="P:cellular response to hypoxia"/>
    <property type="evidence" value="ECO:0007007"/>
    <property type="project" value="TAIR"/>
</dbReference>
<dbReference type="GO" id="GO:0051607">
    <property type="term" value="P:defense response to virus"/>
    <property type="evidence" value="ECO:0000353"/>
    <property type="project" value="TAIR"/>
</dbReference>
<dbReference type="GO" id="GO:0002230">
    <property type="term" value="P:positive regulation of defense response to virus by host"/>
    <property type="evidence" value="ECO:0000314"/>
    <property type="project" value="UniProtKB"/>
</dbReference>
<dbReference type="GO" id="GO:0002237">
    <property type="term" value="P:response to molecule of bacterial origin"/>
    <property type="evidence" value="ECO:0000270"/>
    <property type="project" value="UniProtKB"/>
</dbReference>
<dbReference type="GO" id="GO:0009615">
    <property type="term" value="P:response to virus"/>
    <property type="evidence" value="ECO:0000270"/>
    <property type="project" value="UniProtKB"/>
</dbReference>
<dbReference type="GO" id="GO:0016032">
    <property type="term" value="P:viral process"/>
    <property type="evidence" value="ECO:0000315"/>
    <property type="project" value="UniProtKB"/>
</dbReference>
<dbReference type="FunFam" id="2.170.150.80:FF:000002">
    <property type="entry name" value="Nac domain-containing protein 86"/>
    <property type="match status" value="1"/>
</dbReference>
<dbReference type="Gene3D" id="2.170.150.80">
    <property type="entry name" value="NAC domain"/>
    <property type="match status" value="1"/>
</dbReference>
<dbReference type="InterPro" id="IPR003441">
    <property type="entry name" value="NAC-dom"/>
</dbReference>
<dbReference type="InterPro" id="IPR036093">
    <property type="entry name" value="NAC_dom_sf"/>
</dbReference>
<dbReference type="PANTHER" id="PTHR31744:SF216">
    <property type="entry name" value="NAC TRANSCRIPTION FACTOR"/>
    <property type="match status" value="1"/>
</dbReference>
<dbReference type="PANTHER" id="PTHR31744">
    <property type="entry name" value="PROTEIN CUP-SHAPED COTYLEDON 2-RELATED"/>
    <property type="match status" value="1"/>
</dbReference>
<dbReference type="Pfam" id="PF02365">
    <property type="entry name" value="NAM"/>
    <property type="match status" value="1"/>
</dbReference>
<dbReference type="SUPFAM" id="SSF101941">
    <property type="entry name" value="NAC domain"/>
    <property type="match status" value="1"/>
</dbReference>
<dbReference type="PROSITE" id="PS51005">
    <property type="entry name" value="NAC"/>
    <property type="match status" value="1"/>
</dbReference>
<sequence>MKEDMEVLSLASLPVGFRFSPTDEELVRYYLRLKINGHDNDVRVIREIDICKWEPWDLPDFSVVKTTDSEWLFFCPLDRKYPSGSRMNRATVAGYWKATGKDRKIKSGKTKIIGVKRTLVFYTGRAPKGTRTCWIMHEYRATEKDLDGTKSGQNPFVVCKLFKKQDIVNGAAEPEESKSCEVEPAVSSPTVVDEVEMSEVSPVFPKTEETNPCDVAESSLVIPSECRSGYSVPEVTTTGLDDIDWLSFMEFDSPKLFSPLHSQVQSELGSSFNGLQSESSELFKNHNEDYIQTQYGTNDADEYMSKFLDSFLDIPYEPEQIPYEPQNLSSCNKINDESKRGIKIRARRAQAPGCAEQFVMQGDASRRLRLQVNLNSHKSETDSTQLQFIKKEVKDTTTETMTKGCGNFTRSKSRTSFIFKKIAAMGCSYRGLFRVGVVAVVCVMSVCSLVA</sequence>
<accession>Q9LKG8</accession>
<feature type="chain" id="PRO_0000434570" description="NAC domain-containing protein 91">
    <location>
        <begin position="1"/>
        <end position="451"/>
    </location>
</feature>
<feature type="transmembrane region" description="Helical" evidence="2">
    <location>
        <begin position="431"/>
        <end position="450"/>
    </location>
</feature>
<feature type="domain" description="NAC" evidence="3">
    <location>
        <begin position="13"/>
        <end position="164"/>
    </location>
</feature>
<feature type="DNA-binding region" evidence="3">
    <location>
        <begin position="113"/>
        <end position="170"/>
    </location>
</feature>
<feature type="region of interest" description="Involved in Transcription activation" evidence="5">
    <location>
        <begin position="1"/>
        <end position="268"/>
    </location>
</feature>
<feature type="region of interest" description="Turnip crinkle virus (TCV) capsid protein- (CP-) binding" evidence="5">
    <location>
        <begin position="351"/>
        <end position="451"/>
    </location>
</feature>
<feature type="modified residue" description="Phosphothreonine" evidence="1 11">
    <location>
        <position position="142"/>
    </location>
</feature>
<comment type="function">
    <text evidence="1 4 5 7 8">Transcription activator essential for the anti-viral defense called virus basal resistance response pathway (PubMed:11041886, PubMed:15629774, PubMed:18785827, PubMed:24418554). Not involved in HRT-mediated hypersensitive response (HR) and resistance to TCV (PubMed:18785827). Binds DNA non specifically (PubMed:15629774). Activated by proteolytic cleavage through regulated intramembrane proteolysis (RIP) (By similarity).</text>
</comment>
<comment type="function">
    <text evidence="4 5">(Microbial infection) Compromised function in defense response pathway when interacting with the invading viral capsid protein (CP) of turnip crinkle virus (TCV) due to abnormal subcellular localization.</text>
</comment>
<comment type="subunit">
    <text evidence="4 5 8">(Microbial infection) Interacts via its C-terminal region with the N-terminal region of the turnip crinkle virus (TCV) capsid protein (CP); this interaction prevents its nuclear localization and inhibits its function in basal resistance response pathway.</text>
</comment>
<comment type="subcellular location">
    <subcellularLocation>
        <location evidence="3 5">Nucleus</location>
    </subcellularLocation>
    <subcellularLocation>
        <location evidence="5">Endomembrane system</location>
        <topology evidence="2">Single-pass membrane protein</topology>
    </subcellularLocation>
    <text evidence="5">(Microbial infection) Nuclear localization is blocked by its interaction with the coat protein (CP) of turnip crinkle virus (TCV), thus leading to its accumulation in inclusion-like structures peripheral to the nuclei.</text>
</comment>
<comment type="induction">
    <text evidence="6">Induced by bacterial pathogens type III effector proteins (TTEs).</text>
</comment>
<comment type="induction">
    <text evidence="8">(Microbial infection) Accumulates 2 days post infection with turnip crinkle virus (TCV) (PubMed:24418554).</text>
</comment>
<comment type="domain">
    <text evidence="3">The NAC domain includes a DNA binding domain and a dimerization domain.</text>
</comment>
<comment type="PTM">
    <text evidence="1 11">Phosphorylated at Thr-142. Phosphorylation at Thr-142 is required for nuclear import.</text>
</comment>
<comment type="disruption phenotype">
    <text evidence="7 8">Increased replication of turnip crinkle virus (TCV) and cucumber mosaic virus (CMV) (PubMed:18785827, PubMed:24418554). Normal HRT-mediated hypersensitive response (HR) and resistance to TCV (PubMed:18785827). Delayed flower development in antisense asTIP plants (PubMed:24418554).</text>
</comment>
<protein>
    <recommendedName>
        <fullName evidence="10">NAC domain-containing protein 91</fullName>
        <shortName evidence="10">ANAC091</shortName>
    </recommendedName>
    <alternativeName>
        <fullName evidence="9">TCV-interacting protein</fullName>
    </alternativeName>
</protein>
<proteinExistence type="evidence at protein level"/>
<evidence type="ECO:0000250" key="1">
    <source>
        <dbReference type="UniProtKB" id="Q9SCK6"/>
    </source>
</evidence>
<evidence type="ECO:0000255" key="2"/>
<evidence type="ECO:0000255" key="3">
    <source>
        <dbReference type="PROSITE-ProRule" id="PRU00353"/>
    </source>
</evidence>
<evidence type="ECO:0000269" key="4">
    <source>
    </source>
</evidence>
<evidence type="ECO:0000269" key="5">
    <source>
    </source>
</evidence>
<evidence type="ECO:0000269" key="6">
    <source>
    </source>
</evidence>
<evidence type="ECO:0000269" key="7">
    <source>
    </source>
</evidence>
<evidence type="ECO:0000269" key="8">
    <source>
    </source>
</evidence>
<evidence type="ECO:0000303" key="9">
    <source>
    </source>
</evidence>
<evidence type="ECO:0000303" key="10">
    <source>
    </source>
</evidence>
<evidence type="ECO:0000305" key="11"/>
<evidence type="ECO:0000312" key="12">
    <source>
        <dbReference type="EMBL" id="AAF87300.1"/>
    </source>
</evidence>
<evidence type="ECO:0000312" key="13">
    <source>
        <dbReference type="EMBL" id="AAN72023.1"/>
    </source>
</evidence>
<evidence type="ECO:0000312" key="14">
    <source>
        <dbReference type="EMBL" id="BAB11211.1"/>
    </source>
</evidence>
<gene>
    <name evidence="10" type="primary">NAC091</name>
    <name evidence="9" type="synonym">TIP</name>
    <name evidence="13" type="ordered locus">At5g24590</name>
    <name evidence="14" type="ORF">K18P6.12</name>
</gene>
<keyword id="KW-0010">Activator</keyword>
<keyword id="KW-0051">Antiviral defense</keyword>
<keyword id="KW-0238">DNA-binding</keyword>
<keyword id="KW-0945">Host-virus interaction</keyword>
<keyword id="KW-0472">Membrane</keyword>
<keyword id="KW-0539">Nucleus</keyword>
<keyword id="KW-0597">Phosphoprotein</keyword>
<keyword id="KW-0611">Plant defense</keyword>
<keyword id="KW-1185">Reference proteome</keyword>
<keyword id="KW-0804">Transcription</keyword>
<keyword id="KW-0805">Transcription regulation</keyword>
<keyword id="KW-0812">Transmembrane</keyword>
<keyword id="KW-1133">Transmembrane helix</keyword>
<reference key="1">
    <citation type="journal article" date="2000" name="Plant Cell">
        <title>HRT gene function requires interaction between a NAC protein and viral capsid protein to confer resistance to turnip crinkle virus.</title>
        <authorList>
            <person name="Ren T."/>
            <person name="Qu F."/>
            <person name="Morris T.J."/>
        </authorList>
    </citation>
    <scope>NUCLEOTIDE SEQUENCE [MRNA]</scope>
    <scope>FUNCTION (MICROBIAL INFECTION)</scope>
    <scope>INTERACTION WITH THE CAPSID PROTEIN OF TURNIP CRINKLE VIRUS</scope>
    <scope>SUBUNIT (MICROBIAL INFECTION)</scope>
    <source>
        <strain>cv. Columbia</strain>
        <strain>cv. Di-0</strain>
        <strain>cv. Di-17</strain>
    </source>
</reference>
<reference key="2">
    <citation type="journal article" date="1998" name="DNA Res.">
        <title>Structural analysis of Arabidopsis thaliana chromosome 5. IV. Sequence features of the regions of 1,456,315 bp covered by nineteen physically assigned P1 and TAC clones.</title>
        <authorList>
            <person name="Sato S."/>
            <person name="Kaneko T."/>
            <person name="Kotani H."/>
            <person name="Nakamura Y."/>
            <person name="Asamizu E."/>
            <person name="Miyajima N."/>
            <person name="Tabata S."/>
        </authorList>
    </citation>
    <scope>NUCLEOTIDE SEQUENCE [LARGE SCALE GENOMIC DNA]</scope>
    <source>
        <strain>cv. Columbia</strain>
    </source>
</reference>
<reference key="3">
    <citation type="journal article" date="2017" name="Plant J.">
        <title>Araport11: a complete reannotation of the Arabidopsis thaliana reference genome.</title>
        <authorList>
            <person name="Cheng C.Y."/>
            <person name="Krishnakumar V."/>
            <person name="Chan A.P."/>
            <person name="Thibaud-Nissen F."/>
            <person name="Schobel S."/>
            <person name="Town C.D."/>
        </authorList>
    </citation>
    <scope>GENOME REANNOTATION</scope>
    <source>
        <strain>cv. Columbia</strain>
    </source>
</reference>
<reference key="4">
    <citation type="journal article" date="2003" name="Science">
        <title>Empirical analysis of transcriptional activity in the Arabidopsis genome.</title>
        <authorList>
            <person name="Yamada K."/>
            <person name="Lim J."/>
            <person name="Dale J.M."/>
            <person name="Chen H."/>
            <person name="Shinn P."/>
            <person name="Palm C.J."/>
            <person name="Southwick A.M."/>
            <person name="Wu H.C."/>
            <person name="Kim C.J."/>
            <person name="Nguyen M."/>
            <person name="Pham P.K."/>
            <person name="Cheuk R.F."/>
            <person name="Karlin-Newmann G."/>
            <person name="Liu S.X."/>
            <person name="Lam B."/>
            <person name="Sakano H."/>
            <person name="Wu T."/>
            <person name="Yu G."/>
            <person name="Miranda M."/>
            <person name="Quach H.L."/>
            <person name="Tripp M."/>
            <person name="Chang C.H."/>
            <person name="Lee J.M."/>
            <person name="Toriumi M.J."/>
            <person name="Chan M.M."/>
            <person name="Tang C.C."/>
            <person name="Onodera C.S."/>
            <person name="Deng J.M."/>
            <person name="Akiyama K."/>
            <person name="Ansari Y."/>
            <person name="Arakawa T."/>
            <person name="Banh J."/>
            <person name="Banno F."/>
            <person name="Bowser L."/>
            <person name="Brooks S.Y."/>
            <person name="Carninci P."/>
            <person name="Chao Q."/>
            <person name="Choy N."/>
            <person name="Enju A."/>
            <person name="Goldsmith A.D."/>
            <person name="Gurjal M."/>
            <person name="Hansen N.F."/>
            <person name="Hayashizaki Y."/>
            <person name="Johnson-Hopson C."/>
            <person name="Hsuan V.W."/>
            <person name="Iida K."/>
            <person name="Karnes M."/>
            <person name="Khan S."/>
            <person name="Koesema E."/>
            <person name="Ishida J."/>
            <person name="Jiang P.X."/>
            <person name="Jones T."/>
            <person name="Kawai J."/>
            <person name="Kamiya A."/>
            <person name="Meyers C."/>
            <person name="Nakajima M."/>
            <person name="Narusaka M."/>
            <person name="Seki M."/>
            <person name="Sakurai T."/>
            <person name="Satou M."/>
            <person name="Tamse R."/>
            <person name="Vaysberg M."/>
            <person name="Wallender E.K."/>
            <person name="Wong C."/>
            <person name="Yamamura Y."/>
            <person name="Yuan S."/>
            <person name="Shinozaki K."/>
            <person name="Davis R.W."/>
            <person name="Theologis A."/>
            <person name="Ecker J.R."/>
        </authorList>
    </citation>
    <scope>NUCLEOTIDE SEQUENCE [LARGE SCALE MRNA]</scope>
    <source>
        <strain>cv. Columbia</strain>
    </source>
</reference>
<reference key="5">
    <citation type="journal article" date="2003" name="DNA Res.">
        <title>Comprehensive analysis of NAC family genes in Oryza sativa and Arabidopsis thaliana.</title>
        <authorList>
            <person name="Ooka H."/>
            <person name="Satoh K."/>
            <person name="Doi K."/>
            <person name="Nagata T."/>
            <person name="Otomo Y."/>
            <person name="Murakami K."/>
            <person name="Matsubara K."/>
            <person name="Osato N."/>
            <person name="Kawai J."/>
            <person name="Carninci P."/>
            <person name="Hayashizaki Y."/>
            <person name="Suzuki K."/>
            <person name="Kojima K."/>
            <person name="Takahara Y."/>
            <person name="Yamamoto K."/>
            <person name="Kikuchi S."/>
        </authorList>
    </citation>
    <scope>GENE FAMILY</scope>
    <scope>NOMENCLATURE</scope>
</reference>
<reference key="6">
    <citation type="journal article" date="2005" name="Virology">
        <title>The nuclear localization of the Arabidopsis transcription factor TIP is blocked by its interaction with the coat protein of Turnip crinkle virus.</title>
        <authorList>
            <person name="Ren T."/>
            <person name="Qu F."/>
            <person name="Morris T.J."/>
        </authorList>
    </citation>
    <scope>FUNCTION (MICROBIAL INFECTION)</scope>
    <scope>SUBCELLULAR LOCATION (MICROBIAL INFECTION)</scope>
    <scope>INTERACTION WITH THE CAPSID PROTEIN OF TURNIP CRINKLE VIRUS</scope>
    <scope>SUBUNIT (MICROBIAL INFECTION)</scope>
</reference>
<reference key="7">
    <citation type="journal article" date="2006" name="Plant J.">
        <title>Type III effectors orchestrate a complex interplay between transcriptional networks to modify basal defence responses during pathogenesis and resistance.</title>
        <authorList>
            <person name="Truman W."/>
            <person name="de Zabala M.T."/>
            <person name="Grant M."/>
        </authorList>
    </citation>
    <scope>INDUCTION BY TTE (MICROBIAL INFECTION)</scope>
</reference>
<reference key="8">
    <citation type="journal article" date="2008" name="Mol. Plant Microbe Interact.">
        <title>HRT-mediated hypersensitive response and resistance to Turnip crinkle virus in Arabidopsis does not require the function of TIP, the presumed guardee protein.</title>
        <authorList>
            <person name="Jeong R.-D."/>
            <person name="Chandra-Shekara A.C."/>
            <person name="Kachroo A."/>
            <person name="Klessig D.F."/>
            <person name="Kachroo P."/>
        </authorList>
    </citation>
    <scope>FUNCTION</scope>
    <scope>DISRUPTION PHENOTYPE</scope>
    <source>
        <strain>cv. Columbia</strain>
        <strain>cv. Di-17</strain>
    </source>
</reference>
<reference key="9">
    <citation type="journal article" date="2014" name="Virology">
        <title>Turnip crinkle virus coat protein inhibits the basal immune response to virus invasion in Arabidopsis by binding to the NAC transcription factor TIP.</title>
        <authorList>
            <person name="Donze T."/>
            <person name="Qu F."/>
            <person name="Twigg P."/>
            <person name="Morris T.J."/>
        </authorList>
    </citation>
    <scope>FUNCTION</scope>
    <scope>INDUCTION BY TCV (MICROBIAL INFECTION)</scope>
    <scope>SUBUNIT (MICROBIAL INFECTION)</scope>
    <source>
        <strain>cv. Columbia</strain>
    </source>
</reference>
<organism evidence="12">
    <name type="scientific">Arabidopsis thaliana</name>
    <name type="common">Mouse-ear cress</name>
    <dbReference type="NCBI Taxonomy" id="3702"/>
    <lineage>
        <taxon>Eukaryota</taxon>
        <taxon>Viridiplantae</taxon>
        <taxon>Streptophyta</taxon>
        <taxon>Embryophyta</taxon>
        <taxon>Tracheophyta</taxon>
        <taxon>Spermatophyta</taxon>
        <taxon>Magnoliopsida</taxon>
        <taxon>eudicotyledons</taxon>
        <taxon>Gunneridae</taxon>
        <taxon>Pentapetalae</taxon>
        <taxon>rosids</taxon>
        <taxon>malvids</taxon>
        <taxon>Brassicales</taxon>
        <taxon>Brassicaceae</taxon>
        <taxon>Camelineae</taxon>
        <taxon>Arabidopsis</taxon>
    </lineage>
</organism>
<name>NAC91_ARATH</name>